<name>AMP3_STEME</name>
<protein>
    <recommendedName>
        <fullName evidence="3">Antimicrobial peptide 3</fullName>
        <shortName evidence="3">SmAMP3</shortName>
    </recommendedName>
</protein>
<proteinExistence type="evidence at protein level"/>
<evidence type="ECO:0000255" key="1">
    <source>
        <dbReference type="PROSITE-ProRule" id="PRU00261"/>
    </source>
</evidence>
<evidence type="ECO:0000269" key="2">
    <source>
    </source>
</evidence>
<evidence type="ECO:0000303" key="3">
    <source>
    </source>
</evidence>
<evidence type="ECO:0000305" key="4"/>
<reference evidence="4" key="1">
    <citation type="journal article" date="2015" name="Biochimie">
        <title>A novel antifungal peptide from leaves of the weed Stellaria media L.</title>
        <authorList>
            <person name="Rogozhin E.A."/>
            <person name="Slezina M.P."/>
            <person name="Slavokhotova A.A."/>
            <person name="Istomina E.A."/>
            <person name="Korostyleva T.V."/>
            <person name="Smirnov A.N."/>
            <person name="Grishin E.V."/>
            <person name="Egorov T.A."/>
            <person name="Odintsova T.I."/>
        </authorList>
    </citation>
    <scope>PROTEIN SEQUENCE</scope>
    <scope>FUNCTION</scope>
    <scope>TISSUE SPECIFICITY</scope>
    <scope>PRESENCE OF DISULFIDE BONDS</scope>
    <scope>MASS SPECTROMETRY</scope>
    <source>
        <tissue evidence="3">Leaf</tissue>
    </source>
</reference>
<sequence length="35" mass="3371">VGPGGECGGRFGGCAGGQCCSRFGFCGSGPKYCAH</sequence>
<dbReference type="SMR" id="C0HJU5"/>
<dbReference type="GO" id="GO:0008061">
    <property type="term" value="F:chitin binding"/>
    <property type="evidence" value="ECO:0007669"/>
    <property type="project" value="UniProtKB-KW"/>
</dbReference>
<dbReference type="GO" id="GO:0050832">
    <property type="term" value="P:defense response to fungus"/>
    <property type="evidence" value="ECO:0007669"/>
    <property type="project" value="UniProtKB-KW"/>
</dbReference>
<dbReference type="GO" id="GO:0031640">
    <property type="term" value="P:killing of cells of another organism"/>
    <property type="evidence" value="ECO:0007669"/>
    <property type="project" value="UniProtKB-KW"/>
</dbReference>
<dbReference type="Gene3D" id="3.30.60.10">
    <property type="entry name" value="Endochitinase-like"/>
    <property type="match status" value="1"/>
</dbReference>
<dbReference type="InterPro" id="IPR018371">
    <property type="entry name" value="Chitin-binding_1_CS"/>
</dbReference>
<dbReference type="InterPro" id="IPR036861">
    <property type="entry name" value="Endochitinase-like_sf"/>
</dbReference>
<dbReference type="SUPFAM" id="SSF57016">
    <property type="entry name" value="Plant lectins/antimicrobial peptides"/>
    <property type="match status" value="1"/>
</dbReference>
<dbReference type="PROSITE" id="PS00026">
    <property type="entry name" value="CHIT_BIND_I_1"/>
    <property type="match status" value="1"/>
</dbReference>
<feature type="peptide" id="PRO_0000434197" description="Antimicrobial peptide 3">
    <location>
        <begin position="1"/>
        <end position="35"/>
    </location>
</feature>
<feature type="domain" description="Chitin-binding type-1" evidence="1">
    <location>
        <begin position="4"/>
        <end position="35"/>
    </location>
</feature>
<feature type="disulfide bond" evidence="1">
    <location>
        <begin position="7"/>
        <end position="20"/>
    </location>
</feature>
<feature type="disulfide bond" evidence="1">
    <location>
        <begin position="14"/>
        <end position="26"/>
    </location>
</feature>
<feature type="disulfide bond" evidence="1">
    <location>
        <begin position="19"/>
        <end position="33"/>
    </location>
</feature>
<comment type="function">
    <text evidence="2">Has antifungal activity against A.niger (IC(50)=5.4 uM), B.sorokiniana (IC(50)=2.0 uM), B.cinerea (IC(50)=1.6 uM), F.solani (IC(50)=3.7 uM) and A.alternata (IC(50)=5.0 uM). Binds chitin in vitro. Has no antibacterial activity at concentrations up to 10 uM.</text>
</comment>
<comment type="tissue specificity">
    <text evidence="2">Expressed in leaf, flower, stem and seed with highest expression in leaf (at protein level).</text>
</comment>
<comment type="PTM">
    <text evidence="2">Contains 3 disulfide bonds.</text>
</comment>
<comment type="mass spectrometry" mass="3364.9" method="MALDI" evidence="2"/>
<keyword id="KW-0929">Antimicrobial</keyword>
<keyword id="KW-0147">Chitin-binding</keyword>
<keyword id="KW-0903">Direct protein sequencing</keyword>
<keyword id="KW-1015">Disulfide bond</keyword>
<keyword id="KW-0295">Fungicide</keyword>
<keyword id="KW-0611">Plant defense</keyword>
<organism evidence="3">
    <name type="scientific">Stellaria media</name>
    <name type="common">Common chickweed</name>
    <name type="synonym">Alsine media</name>
    <dbReference type="NCBI Taxonomy" id="13274"/>
    <lineage>
        <taxon>Eukaryota</taxon>
        <taxon>Viridiplantae</taxon>
        <taxon>Streptophyta</taxon>
        <taxon>Embryophyta</taxon>
        <taxon>Tracheophyta</taxon>
        <taxon>Spermatophyta</taxon>
        <taxon>Magnoliopsida</taxon>
        <taxon>eudicotyledons</taxon>
        <taxon>Gunneridae</taxon>
        <taxon>Pentapetalae</taxon>
        <taxon>Caryophyllales</taxon>
        <taxon>Caryophyllaceae</taxon>
        <taxon>Alsineae</taxon>
        <taxon>Stellaria</taxon>
    </lineage>
</organism>
<accession>C0HJU5</accession>